<protein>
    <recommendedName>
        <fullName evidence="1">tRNA(Ile)-lysidine synthase</fullName>
        <ecNumber evidence="1">6.3.4.19</ecNumber>
    </recommendedName>
    <alternativeName>
        <fullName evidence="1">tRNA(Ile)-2-lysyl-cytidine synthase</fullName>
    </alternativeName>
    <alternativeName>
        <fullName evidence="1">tRNA(Ile)-lysidine synthetase</fullName>
    </alternativeName>
</protein>
<name>TILS_RHOJR</name>
<dbReference type="EC" id="6.3.4.19" evidence="1"/>
<dbReference type="EMBL" id="CP000431">
    <property type="protein sequence ID" value="ABG96189.1"/>
    <property type="molecule type" value="Genomic_DNA"/>
</dbReference>
<dbReference type="RefSeq" id="WP_011596819.1">
    <property type="nucleotide sequence ID" value="NC_008268.1"/>
</dbReference>
<dbReference type="SMR" id="Q0S8E7"/>
<dbReference type="KEGG" id="rha:RHA1_ro04403"/>
<dbReference type="PATRIC" id="fig|101510.16.peg.4432"/>
<dbReference type="eggNOG" id="COG0037">
    <property type="taxonomic scope" value="Bacteria"/>
</dbReference>
<dbReference type="HOGENOM" id="CLU_018869_1_1_11"/>
<dbReference type="OrthoDB" id="5244702at2"/>
<dbReference type="Proteomes" id="UP000008710">
    <property type="component" value="Chromosome"/>
</dbReference>
<dbReference type="GO" id="GO:0005737">
    <property type="term" value="C:cytoplasm"/>
    <property type="evidence" value="ECO:0007669"/>
    <property type="project" value="UniProtKB-SubCell"/>
</dbReference>
<dbReference type="GO" id="GO:0005524">
    <property type="term" value="F:ATP binding"/>
    <property type="evidence" value="ECO:0007669"/>
    <property type="project" value="UniProtKB-UniRule"/>
</dbReference>
<dbReference type="GO" id="GO:0032267">
    <property type="term" value="F:tRNA(Ile)-lysidine synthase activity"/>
    <property type="evidence" value="ECO:0007669"/>
    <property type="project" value="UniProtKB-EC"/>
</dbReference>
<dbReference type="GO" id="GO:0006400">
    <property type="term" value="P:tRNA modification"/>
    <property type="evidence" value="ECO:0007669"/>
    <property type="project" value="UniProtKB-UniRule"/>
</dbReference>
<dbReference type="CDD" id="cd01992">
    <property type="entry name" value="TilS_N"/>
    <property type="match status" value="1"/>
</dbReference>
<dbReference type="Gene3D" id="1.20.59.20">
    <property type="match status" value="1"/>
</dbReference>
<dbReference type="Gene3D" id="3.40.50.620">
    <property type="entry name" value="HUPs"/>
    <property type="match status" value="1"/>
</dbReference>
<dbReference type="HAMAP" id="MF_01161">
    <property type="entry name" value="tRNA_Ile_lys_synt"/>
    <property type="match status" value="1"/>
</dbReference>
<dbReference type="InterPro" id="IPR014729">
    <property type="entry name" value="Rossmann-like_a/b/a_fold"/>
</dbReference>
<dbReference type="InterPro" id="IPR011063">
    <property type="entry name" value="TilS/TtcA_N"/>
</dbReference>
<dbReference type="InterPro" id="IPR012094">
    <property type="entry name" value="tRNA_Ile_lys_synt"/>
</dbReference>
<dbReference type="InterPro" id="IPR012795">
    <property type="entry name" value="tRNA_Ile_lys_synt_N"/>
</dbReference>
<dbReference type="InterPro" id="IPR015262">
    <property type="entry name" value="tRNA_Ile_lys_synt_subst-bd"/>
</dbReference>
<dbReference type="NCBIfam" id="TIGR02432">
    <property type="entry name" value="lysidine_TilS_N"/>
    <property type="match status" value="1"/>
</dbReference>
<dbReference type="PANTHER" id="PTHR43033">
    <property type="entry name" value="TRNA(ILE)-LYSIDINE SYNTHASE-RELATED"/>
    <property type="match status" value="1"/>
</dbReference>
<dbReference type="PANTHER" id="PTHR43033:SF1">
    <property type="entry name" value="TRNA(ILE)-LYSIDINE SYNTHASE-RELATED"/>
    <property type="match status" value="1"/>
</dbReference>
<dbReference type="Pfam" id="PF01171">
    <property type="entry name" value="ATP_bind_3"/>
    <property type="match status" value="1"/>
</dbReference>
<dbReference type="Pfam" id="PF09179">
    <property type="entry name" value="TilS"/>
    <property type="match status" value="1"/>
</dbReference>
<dbReference type="SUPFAM" id="SSF52402">
    <property type="entry name" value="Adenine nucleotide alpha hydrolases-like"/>
    <property type="match status" value="1"/>
</dbReference>
<dbReference type="SUPFAM" id="SSF82829">
    <property type="entry name" value="MesJ substrate recognition domain-like"/>
    <property type="match status" value="1"/>
</dbReference>
<accession>Q0S8E7</accession>
<sequence>MVLPEEPAILEVRHAVRRWIAAHAPDGEIAVALSGGADSLALTAAAAAEARSVCALVVDHRLQPGSADVADEAAARARALGCASAEVLPVDVTGSGGLEAAARQARYRALDSARGTRPVLLGHTLDDQAETVLLGLSRGSGGRSIWGMSAYDTPWGRPLLDVRRALTRQACAELGLSPHEDPHNASPDFVRVRLRTEVLPLLEDVLGGGVAGALARTGEHLREEGAVLDAMAADAQAKAVVEGEIDTALLALSAPPVRRRVLRSWLLAAGARGLGDTQLRAVDDLVARWRGQGQVAIGGGTPDARFVVRRRRGRLNVGLDDRRRV</sequence>
<comment type="function">
    <text evidence="1">Ligates lysine onto the cytidine present at position 34 of the AUA codon-specific tRNA(Ile) that contains the anticodon CAU, in an ATP-dependent manner. Cytidine is converted to lysidine, thus changing the amino acid specificity of the tRNA from methionine to isoleucine.</text>
</comment>
<comment type="catalytic activity">
    <reaction evidence="1">
        <text>cytidine(34) in tRNA(Ile2) + L-lysine + ATP = lysidine(34) in tRNA(Ile2) + AMP + diphosphate + H(+)</text>
        <dbReference type="Rhea" id="RHEA:43744"/>
        <dbReference type="Rhea" id="RHEA-COMP:10625"/>
        <dbReference type="Rhea" id="RHEA-COMP:10670"/>
        <dbReference type="ChEBI" id="CHEBI:15378"/>
        <dbReference type="ChEBI" id="CHEBI:30616"/>
        <dbReference type="ChEBI" id="CHEBI:32551"/>
        <dbReference type="ChEBI" id="CHEBI:33019"/>
        <dbReference type="ChEBI" id="CHEBI:82748"/>
        <dbReference type="ChEBI" id="CHEBI:83665"/>
        <dbReference type="ChEBI" id="CHEBI:456215"/>
        <dbReference type="EC" id="6.3.4.19"/>
    </reaction>
</comment>
<comment type="subcellular location">
    <subcellularLocation>
        <location evidence="1">Cytoplasm</location>
    </subcellularLocation>
</comment>
<comment type="domain">
    <text>The N-terminal region contains the highly conserved SGGXDS motif, predicted to be a P-loop motif involved in ATP binding.</text>
</comment>
<comment type="similarity">
    <text evidence="1">Belongs to the tRNA(Ile)-lysidine synthase family.</text>
</comment>
<reference key="1">
    <citation type="journal article" date="2006" name="Proc. Natl. Acad. Sci. U.S.A.">
        <title>The complete genome of Rhodococcus sp. RHA1 provides insights into a catabolic powerhouse.</title>
        <authorList>
            <person name="McLeod M.P."/>
            <person name="Warren R.L."/>
            <person name="Hsiao W.W.L."/>
            <person name="Araki N."/>
            <person name="Myhre M."/>
            <person name="Fernandes C."/>
            <person name="Miyazawa D."/>
            <person name="Wong W."/>
            <person name="Lillquist A.L."/>
            <person name="Wang D."/>
            <person name="Dosanjh M."/>
            <person name="Hara H."/>
            <person name="Petrescu A."/>
            <person name="Morin R.D."/>
            <person name="Yang G."/>
            <person name="Stott J.M."/>
            <person name="Schein J.E."/>
            <person name="Shin H."/>
            <person name="Smailus D."/>
            <person name="Siddiqui A.S."/>
            <person name="Marra M.A."/>
            <person name="Jones S.J.M."/>
            <person name="Holt R."/>
            <person name="Brinkman F.S.L."/>
            <person name="Miyauchi K."/>
            <person name="Fukuda M."/>
            <person name="Davies J.E."/>
            <person name="Mohn W.W."/>
            <person name="Eltis L.D."/>
        </authorList>
    </citation>
    <scope>NUCLEOTIDE SEQUENCE [LARGE SCALE GENOMIC DNA]</scope>
    <source>
        <strain>RHA1</strain>
    </source>
</reference>
<gene>
    <name evidence="1" type="primary">tilS</name>
    <name type="ordered locus">RHA1_ro04403</name>
</gene>
<proteinExistence type="inferred from homology"/>
<organism>
    <name type="scientific">Rhodococcus jostii (strain RHA1)</name>
    <dbReference type="NCBI Taxonomy" id="101510"/>
    <lineage>
        <taxon>Bacteria</taxon>
        <taxon>Bacillati</taxon>
        <taxon>Actinomycetota</taxon>
        <taxon>Actinomycetes</taxon>
        <taxon>Mycobacteriales</taxon>
        <taxon>Nocardiaceae</taxon>
        <taxon>Rhodococcus</taxon>
    </lineage>
</organism>
<keyword id="KW-0067">ATP-binding</keyword>
<keyword id="KW-0963">Cytoplasm</keyword>
<keyword id="KW-0436">Ligase</keyword>
<keyword id="KW-0547">Nucleotide-binding</keyword>
<keyword id="KW-0819">tRNA processing</keyword>
<evidence type="ECO:0000255" key="1">
    <source>
        <dbReference type="HAMAP-Rule" id="MF_01161"/>
    </source>
</evidence>
<feature type="chain" id="PRO_1000065622" description="tRNA(Ile)-lysidine synthase">
    <location>
        <begin position="1"/>
        <end position="325"/>
    </location>
</feature>
<feature type="binding site" evidence="1">
    <location>
        <begin position="34"/>
        <end position="39"/>
    </location>
    <ligand>
        <name>ATP</name>
        <dbReference type="ChEBI" id="CHEBI:30616"/>
    </ligand>
</feature>